<organismHost>
    <name type="scientific">Acanthamoeba polyphaga</name>
    <name type="common">Amoeba</name>
    <dbReference type="NCBI Taxonomy" id="5757"/>
</organismHost>
<keyword id="KW-1185">Reference proteome</keyword>
<organism>
    <name type="scientific">Acanthamoeba polyphaga mimivirus</name>
    <name type="common">APMV</name>
    <dbReference type="NCBI Taxonomy" id="212035"/>
    <lineage>
        <taxon>Viruses</taxon>
        <taxon>Varidnaviria</taxon>
        <taxon>Bamfordvirae</taxon>
        <taxon>Nucleocytoviricota</taxon>
        <taxon>Megaviricetes</taxon>
        <taxon>Imitervirales</taxon>
        <taxon>Mimiviridae</taxon>
        <taxon>Megamimivirinae</taxon>
        <taxon>Mimivirus</taxon>
        <taxon>Mimivirus bradfordmassiliense</taxon>
    </lineage>
</organism>
<name>YR328_MIMIV</name>
<feature type="chain" id="PRO_0000244038" description="Uncharacterized protein R328">
    <location>
        <begin position="1"/>
        <end position="343"/>
    </location>
</feature>
<feature type="region of interest" description="Disordered" evidence="1">
    <location>
        <begin position="1"/>
        <end position="25"/>
    </location>
</feature>
<feature type="region of interest" description="Disordered" evidence="1">
    <location>
        <begin position="62"/>
        <end position="119"/>
    </location>
</feature>
<feature type="region of interest" description="Disordered" evidence="1">
    <location>
        <begin position="169"/>
        <end position="188"/>
    </location>
</feature>
<feature type="compositionally biased region" description="Basic residues" evidence="1">
    <location>
        <begin position="62"/>
        <end position="71"/>
    </location>
</feature>
<feature type="compositionally biased region" description="Basic and acidic residues" evidence="1">
    <location>
        <begin position="72"/>
        <end position="81"/>
    </location>
</feature>
<feature type="compositionally biased region" description="Acidic residues" evidence="1">
    <location>
        <begin position="83"/>
        <end position="107"/>
    </location>
</feature>
<dbReference type="EMBL" id="AY653733">
    <property type="protein sequence ID" value="AAV50597.1"/>
    <property type="molecule type" value="Genomic_DNA"/>
</dbReference>
<dbReference type="KEGG" id="vg:9924945"/>
<dbReference type="OrthoDB" id="31217at10239"/>
<dbReference type="Proteomes" id="UP000001134">
    <property type="component" value="Genome"/>
</dbReference>
<proteinExistence type="predicted"/>
<gene>
    <name type="ordered locus">MIMI_R328</name>
</gene>
<evidence type="ECO:0000256" key="1">
    <source>
        <dbReference type="SAM" id="MobiDB-lite"/>
    </source>
</evidence>
<protein>
    <recommendedName>
        <fullName>Uncharacterized protein R328</fullName>
    </recommendedName>
</protein>
<accession>Q5UQS5</accession>
<reference key="1">
    <citation type="journal article" date="2004" name="Science">
        <title>The 1.2-megabase genome sequence of Mimivirus.</title>
        <authorList>
            <person name="Raoult D."/>
            <person name="Audic S."/>
            <person name="Robert C."/>
            <person name="Abergel C."/>
            <person name="Renesto P."/>
            <person name="Ogata H."/>
            <person name="La Scola B."/>
            <person name="Susan M."/>
            <person name="Claverie J.-M."/>
        </authorList>
    </citation>
    <scope>NUCLEOTIDE SEQUENCE [LARGE SCALE GENOMIC DNA]</scope>
    <source>
        <strain>Rowbotham-Bradford</strain>
    </source>
</reference>
<sequence length="343" mass="39514">MSSKKGNMNKKPLKKSYSLNGLSGTLDGTLETKVKDLIEEPLDAQNTLSDDYTNKSRRKYLKNIRQFKKSQNKTDTEKSGETNDSDYSDYSDNSDDVDDLDDVDDLNDPGNSKFSDCSDCLEDMDNYDNSDDELDLNETTNKSTNKILDKLNIKTTSFTKLNKSTKFNNPKITKTIPNKSNGKTTKKSTKNSNEIFKELIKKQLPDVPAQWKLNINDMKRICKYIDTSIFDKDHCCIWNGYITNINNSNKGTYVNFYFRNKKVALHRLLYSNFVAPLNSSEYLKFNCDNKGICCNINHYEKYKYSKNNVVVKKEPKNKEHKKEVKEVIIIGSDDPDKLIINFD</sequence>